<sequence length="246" mass="26282">MLNDKTAIVTGASRGIGRSIALDLAKSGANVVVNYSGNEAKANEVVDEIKSMGRKAIAVKADVSNPEDVQNMIKETLSVFSTIDILVNNAGITRDNLIMRMKEDEWDDVININLKGVFNCTKAVTRQMMKQRSGRIINVSSIVGVSGNPGQANYVAAKAGVIGLTKSSAKELASRNITVNAIAPGFISTDMTDKLAKDVQDEMLKQIPLARFGEPSDVSSVVTFLASEGARYMTGQTLHIDGGMVM</sequence>
<gene>
    <name type="primary">fabG</name>
    <name type="synonym">ylpF</name>
    <name type="ordered locus">BSU15910</name>
</gene>
<keyword id="KW-0275">Fatty acid biosynthesis</keyword>
<keyword id="KW-0276">Fatty acid metabolism</keyword>
<keyword id="KW-0444">Lipid biosynthesis</keyword>
<keyword id="KW-0443">Lipid metabolism</keyword>
<keyword id="KW-0521">NADP</keyword>
<keyword id="KW-0560">Oxidoreductase</keyword>
<keyword id="KW-1185">Reference proteome</keyword>
<evidence type="ECO:0000250" key="1"/>
<evidence type="ECO:0000305" key="2"/>
<name>FABG_BACSU</name>
<reference key="1">
    <citation type="journal article" date="1996" name="J. Bacteriol.">
        <title>Bacillus subtilis acyl carrier protein is encoded in a cluster of lipid biosynthesis genes.</title>
        <authorList>
            <person name="Morbidoni H.R."/>
            <person name="de Mendoza D."/>
            <person name="Cronan J.E. Jr."/>
        </authorList>
    </citation>
    <scope>NUCLEOTIDE SEQUENCE [GENOMIC DNA]</scope>
    <source>
        <strain>168</strain>
    </source>
</reference>
<reference key="2">
    <citation type="journal article" date="1997" name="Nature">
        <title>The complete genome sequence of the Gram-positive bacterium Bacillus subtilis.</title>
        <authorList>
            <person name="Kunst F."/>
            <person name="Ogasawara N."/>
            <person name="Moszer I."/>
            <person name="Albertini A.M."/>
            <person name="Alloni G."/>
            <person name="Azevedo V."/>
            <person name="Bertero M.G."/>
            <person name="Bessieres P."/>
            <person name="Bolotin A."/>
            <person name="Borchert S."/>
            <person name="Borriss R."/>
            <person name="Boursier L."/>
            <person name="Brans A."/>
            <person name="Braun M."/>
            <person name="Brignell S.C."/>
            <person name="Bron S."/>
            <person name="Brouillet S."/>
            <person name="Bruschi C.V."/>
            <person name="Caldwell B."/>
            <person name="Capuano V."/>
            <person name="Carter N.M."/>
            <person name="Choi S.-K."/>
            <person name="Codani J.-J."/>
            <person name="Connerton I.F."/>
            <person name="Cummings N.J."/>
            <person name="Daniel R.A."/>
            <person name="Denizot F."/>
            <person name="Devine K.M."/>
            <person name="Duesterhoeft A."/>
            <person name="Ehrlich S.D."/>
            <person name="Emmerson P.T."/>
            <person name="Entian K.-D."/>
            <person name="Errington J."/>
            <person name="Fabret C."/>
            <person name="Ferrari E."/>
            <person name="Foulger D."/>
            <person name="Fritz C."/>
            <person name="Fujita M."/>
            <person name="Fujita Y."/>
            <person name="Fuma S."/>
            <person name="Galizzi A."/>
            <person name="Galleron N."/>
            <person name="Ghim S.-Y."/>
            <person name="Glaser P."/>
            <person name="Goffeau A."/>
            <person name="Golightly E.J."/>
            <person name="Grandi G."/>
            <person name="Guiseppi G."/>
            <person name="Guy B.J."/>
            <person name="Haga K."/>
            <person name="Haiech J."/>
            <person name="Harwood C.R."/>
            <person name="Henaut A."/>
            <person name="Hilbert H."/>
            <person name="Holsappel S."/>
            <person name="Hosono S."/>
            <person name="Hullo M.-F."/>
            <person name="Itaya M."/>
            <person name="Jones L.-M."/>
            <person name="Joris B."/>
            <person name="Karamata D."/>
            <person name="Kasahara Y."/>
            <person name="Klaerr-Blanchard M."/>
            <person name="Klein C."/>
            <person name="Kobayashi Y."/>
            <person name="Koetter P."/>
            <person name="Koningstein G."/>
            <person name="Krogh S."/>
            <person name="Kumano M."/>
            <person name="Kurita K."/>
            <person name="Lapidus A."/>
            <person name="Lardinois S."/>
            <person name="Lauber J."/>
            <person name="Lazarevic V."/>
            <person name="Lee S.-M."/>
            <person name="Levine A."/>
            <person name="Liu H."/>
            <person name="Masuda S."/>
            <person name="Mauel C."/>
            <person name="Medigue C."/>
            <person name="Medina N."/>
            <person name="Mellado R.P."/>
            <person name="Mizuno M."/>
            <person name="Moestl D."/>
            <person name="Nakai S."/>
            <person name="Noback M."/>
            <person name="Noone D."/>
            <person name="O'Reilly M."/>
            <person name="Ogawa K."/>
            <person name="Ogiwara A."/>
            <person name="Oudega B."/>
            <person name="Park S.-H."/>
            <person name="Parro V."/>
            <person name="Pohl T.M."/>
            <person name="Portetelle D."/>
            <person name="Porwollik S."/>
            <person name="Prescott A.M."/>
            <person name="Presecan E."/>
            <person name="Pujic P."/>
            <person name="Purnelle B."/>
            <person name="Rapoport G."/>
            <person name="Rey M."/>
            <person name="Reynolds S."/>
            <person name="Rieger M."/>
            <person name="Rivolta C."/>
            <person name="Rocha E."/>
            <person name="Roche B."/>
            <person name="Rose M."/>
            <person name="Sadaie Y."/>
            <person name="Sato T."/>
            <person name="Scanlan E."/>
            <person name="Schleich S."/>
            <person name="Schroeter R."/>
            <person name="Scoffone F."/>
            <person name="Sekiguchi J."/>
            <person name="Sekowska A."/>
            <person name="Seror S.J."/>
            <person name="Serror P."/>
            <person name="Shin B.-S."/>
            <person name="Soldo B."/>
            <person name="Sorokin A."/>
            <person name="Tacconi E."/>
            <person name="Takagi T."/>
            <person name="Takahashi H."/>
            <person name="Takemaru K."/>
            <person name="Takeuchi M."/>
            <person name="Tamakoshi A."/>
            <person name="Tanaka T."/>
            <person name="Terpstra P."/>
            <person name="Tognoni A."/>
            <person name="Tosato V."/>
            <person name="Uchiyama S."/>
            <person name="Vandenbol M."/>
            <person name="Vannier F."/>
            <person name="Vassarotti A."/>
            <person name="Viari A."/>
            <person name="Wambutt R."/>
            <person name="Wedler E."/>
            <person name="Wedler H."/>
            <person name="Weitzenegger T."/>
            <person name="Winters P."/>
            <person name="Wipat A."/>
            <person name="Yamamoto H."/>
            <person name="Yamane K."/>
            <person name="Yasumoto K."/>
            <person name="Yata K."/>
            <person name="Yoshida K."/>
            <person name="Yoshikawa H.-F."/>
            <person name="Zumstein E."/>
            <person name="Yoshikawa H."/>
            <person name="Danchin A."/>
        </authorList>
    </citation>
    <scope>NUCLEOTIDE SEQUENCE [LARGE SCALE GENOMIC DNA]</scope>
    <source>
        <strain>168</strain>
    </source>
</reference>
<reference key="3">
    <citation type="journal article" date="1998" name="Microbiology">
        <title>A 28 kbp segment from the spoVM region of the Bacillus subtilis 168 genome.</title>
        <authorList>
            <person name="Foulger D."/>
            <person name="Errington J."/>
        </authorList>
    </citation>
    <scope>NUCLEOTIDE SEQUENCE [GENOMIC DNA] OF 1-172</scope>
    <source>
        <strain>168</strain>
    </source>
</reference>
<reference key="4">
    <citation type="journal article" date="1996" name="Gene">
        <title>The effect of Srb, a homologue of the mammalian SRP receptor alpha-subunit, on Bacillus subtilis growth and protein translocation.</title>
        <authorList>
            <person name="Oguro A."/>
            <person name="Kakeshita H."/>
            <person name="Takamatsu H."/>
            <person name="Nakamura K."/>
            <person name="Yamane K."/>
        </authorList>
    </citation>
    <scope>NUCLEOTIDE SEQUENCE [GENOMIC DNA] OF 230-246</scope>
    <source>
        <strain>168</strain>
    </source>
</reference>
<dbReference type="EC" id="1.1.1.100"/>
<dbReference type="EMBL" id="U59433">
    <property type="protein sequence ID" value="AAC44307.1"/>
    <property type="molecule type" value="Genomic_DNA"/>
</dbReference>
<dbReference type="EMBL" id="AL009126">
    <property type="protein sequence ID" value="CAB13464.1"/>
    <property type="molecule type" value="Genomic_DNA"/>
</dbReference>
<dbReference type="EMBL" id="Y13937">
    <property type="protein sequence ID" value="CAA74250.1"/>
    <property type="molecule type" value="Genomic_DNA"/>
</dbReference>
<dbReference type="EMBL" id="D64116">
    <property type="protein sequence ID" value="BAA10974.1"/>
    <property type="molecule type" value="Genomic_DNA"/>
</dbReference>
<dbReference type="PIR" id="A69621">
    <property type="entry name" value="A69621"/>
</dbReference>
<dbReference type="RefSeq" id="NP_389473.1">
    <property type="nucleotide sequence ID" value="NC_000964.3"/>
</dbReference>
<dbReference type="RefSeq" id="WP_003232035.1">
    <property type="nucleotide sequence ID" value="NZ_OZ025638.1"/>
</dbReference>
<dbReference type="SMR" id="P51831"/>
<dbReference type="FunCoup" id="P51831">
    <property type="interactions" value="731"/>
</dbReference>
<dbReference type="IntAct" id="P51831">
    <property type="interactions" value="1"/>
</dbReference>
<dbReference type="MINT" id="P51831"/>
<dbReference type="STRING" id="224308.BSU15910"/>
<dbReference type="jPOST" id="P51831"/>
<dbReference type="PaxDb" id="224308-BSU15910"/>
<dbReference type="EnsemblBacteria" id="CAB13464">
    <property type="protein sequence ID" value="CAB13464"/>
    <property type="gene ID" value="BSU_15910"/>
</dbReference>
<dbReference type="GeneID" id="938113"/>
<dbReference type="KEGG" id="bsu:BSU15910"/>
<dbReference type="PATRIC" id="fig|224308.179.peg.1731"/>
<dbReference type="eggNOG" id="COG1028">
    <property type="taxonomic scope" value="Bacteria"/>
</dbReference>
<dbReference type="InParanoid" id="P51831"/>
<dbReference type="OrthoDB" id="9803333at2"/>
<dbReference type="PhylomeDB" id="P51831"/>
<dbReference type="BioCyc" id="BSUB:BSU15910-MONOMER"/>
<dbReference type="BioCyc" id="MetaCyc:BSU15910-MONOMER"/>
<dbReference type="UniPathway" id="UPA00094"/>
<dbReference type="Proteomes" id="UP000001570">
    <property type="component" value="Chromosome"/>
</dbReference>
<dbReference type="GO" id="GO:0004316">
    <property type="term" value="F:3-oxoacyl-[acyl-carrier-protein] reductase (NADPH) activity"/>
    <property type="evidence" value="ECO:0007669"/>
    <property type="project" value="UniProtKB-EC"/>
</dbReference>
<dbReference type="GO" id="GO:0051287">
    <property type="term" value="F:NAD binding"/>
    <property type="evidence" value="ECO:0007669"/>
    <property type="project" value="InterPro"/>
</dbReference>
<dbReference type="GO" id="GO:0016616">
    <property type="term" value="F:oxidoreductase activity, acting on the CH-OH group of donors, NAD or NADP as acceptor"/>
    <property type="evidence" value="ECO:0000318"/>
    <property type="project" value="GO_Central"/>
</dbReference>
<dbReference type="GO" id="GO:0030497">
    <property type="term" value="P:fatty acid elongation"/>
    <property type="evidence" value="ECO:0000318"/>
    <property type="project" value="GO_Central"/>
</dbReference>
<dbReference type="CDD" id="cd05333">
    <property type="entry name" value="BKR_SDR_c"/>
    <property type="match status" value="1"/>
</dbReference>
<dbReference type="FunFam" id="3.40.50.720:FF:000037">
    <property type="entry name" value="3-oxoacyl-[acyl-carrier-protein] reductase FabG"/>
    <property type="match status" value="1"/>
</dbReference>
<dbReference type="Gene3D" id="3.40.50.720">
    <property type="entry name" value="NAD(P)-binding Rossmann-like Domain"/>
    <property type="match status" value="1"/>
</dbReference>
<dbReference type="InterPro" id="IPR011284">
    <property type="entry name" value="3oxo_ACP_reduc"/>
</dbReference>
<dbReference type="InterPro" id="IPR036291">
    <property type="entry name" value="NAD(P)-bd_dom_sf"/>
</dbReference>
<dbReference type="InterPro" id="IPR050259">
    <property type="entry name" value="SDR"/>
</dbReference>
<dbReference type="InterPro" id="IPR002347">
    <property type="entry name" value="SDR_fam"/>
</dbReference>
<dbReference type="NCBIfam" id="TIGR01830">
    <property type="entry name" value="3oxo_ACP_reduc"/>
    <property type="match status" value="1"/>
</dbReference>
<dbReference type="NCBIfam" id="NF004197">
    <property type="entry name" value="PRK05653.1-1"/>
    <property type="match status" value="1"/>
</dbReference>
<dbReference type="NCBIfam" id="NF004198">
    <property type="entry name" value="PRK05653.1-3"/>
    <property type="match status" value="1"/>
</dbReference>
<dbReference type="NCBIfam" id="NF005559">
    <property type="entry name" value="PRK07231.1"/>
    <property type="match status" value="1"/>
</dbReference>
<dbReference type="NCBIfam" id="NF009466">
    <property type="entry name" value="PRK12826.1-2"/>
    <property type="match status" value="1"/>
</dbReference>
<dbReference type="PANTHER" id="PTHR42879">
    <property type="entry name" value="3-OXOACYL-(ACYL-CARRIER-PROTEIN) REDUCTASE"/>
    <property type="match status" value="1"/>
</dbReference>
<dbReference type="PANTHER" id="PTHR42879:SF2">
    <property type="entry name" value="3-OXOACYL-[ACYL-CARRIER-PROTEIN] REDUCTASE FABG"/>
    <property type="match status" value="1"/>
</dbReference>
<dbReference type="Pfam" id="PF13561">
    <property type="entry name" value="adh_short_C2"/>
    <property type="match status" value="1"/>
</dbReference>
<dbReference type="PRINTS" id="PR00081">
    <property type="entry name" value="GDHRDH"/>
</dbReference>
<dbReference type="PRINTS" id="PR00080">
    <property type="entry name" value="SDRFAMILY"/>
</dbReference>
<dbReference type="SMART" id="SM00822">
    <property type="entry name" value="PKS_KR"/>
    <property type="match status" value="1"/>
</dbReference>
<dbReference type="SUPFAM" id="SSF51735">
    <property type="entry name" value="NAD(P)-binding Rossmann-fold domains"/>
    <property type="match status" value="1"/>
</dbReference>
<proteinExistence type="inferred from homology"/>
<comment type="function">
    <text evidence="1">Catalyzes the NADPH-dependent reduction of beta-ketoacyl-ACP substrates to beta-hydroxyacyl-ACP products, the first reductive step in the elongation cycle of fatty acid biosynthesis.</text>
</comment>
<comment type="catalytic activity">
    <reaction>
        <text>a (3R)-hydroxyacyl-[ACP] + NADP(+) = a 3-oxoacyl-[ACP] + NADPH + H(+)</text>
        <dbReference type="Rhea" id="RHEA:17397"/>
        <dbReference type="Rhea" id="RHEA-COMP:9916"/>
        <dbReference type="Rhea" id="RHEA-COMP:9945"/>
        <dbReference type="ChEBI" id="CHEBI:15378"/>
        <dbReference type="ChEBI" id="CHEBI:57783"/>
        <dbReference type="ChEBI" id="CHEBI:58349"/>
        <dbReference type="ChEBI" id="CHEBI:78776"/>
        <dbReference type="ChEBI" id="CHEBI:78827"/>
        <dbReference type="EC" id="1.1.1.100"/>
    </reaction>
</comment>
<comment type="pathway">
    <text>Lipid metabolism; fatty acid biosynthesis.</text>
</comment>
<comment type="subunit">
    <text evidence="1">Homotetramer.</text>
</comment>
<comment type="similarity">
    <text evidence="2">Belongs to the short-chain dehydrogenases/reductases (SDR) family.</text>
</comment>
<organism>
    <name type="scientific">Bacillus subtilis (strain 168)</name>
    <dbReference type="NCBI Taxonomy" id="224308"/>
    <lineage>
        <taxon>Bacteria</taxon>
        <taxon>Bacillati</taxon>
        <taxon>Bacillota</taxon>
        <taxon>Bacilli</taxon>
        <taxon>Bacillales</taxon>
        <taxon>Bacillaceae</taxon>
        <taxon>Bacillus</taxon>
    </lineage>
</organism>
<protein>
    <recommendedName>
        <fullName>3-oxoacyl-[acyl-carrier-protein] reductase FabG</fullName>
        <ecNumber>1.1.1.100</ecNumber>
    </recommendedName>
    <alternativeName>
        <fullName>3-ketoacyl-acyl carrier protein reductase</fullName>
    </alternativeName>
    <alternativeName>
        <fullName>Beta-Ketoacyl-acyl carrier protein reductase</fullName>
    </alternativeName>
    <alternativeName>
        <fullName>Beta-ketoacyl-ACP reductase</fullName>
    </alternativeName>
</protein>
<accession>P51831</accession>
<accession>O31733</accession>
<feature type="chain" id="PRO_0000054665" description="3-oxoacyl-[acyl-carrier-protein] reductase FabG">
    <location>
        <begin position="1"/>
        <end position="246"/>
    </location>
</feature>
<feature type="active site" description="Proton acceptor" evidence="1">
    <location>
        <position position="154"/>
    </location>
</feature>
<feature type="binding site" evidence="1">
    <location>
        <begin position="11"/>
        <end position="14"/>
    </location>
    <ligand>
        <name>NADP(+)</name>
        <dbReference type="ChEBI" id="CHEBI:58349"/>
    </ligand>
</feature>
<feature type="binding site" evidence="1">
    <location>
        <position position="36"/>
    </location>
    <ligand>
        <name>NADP(+)</name>
        <dbReference type="ChEBI" id="CHEBI:58349"/>
    </ligand>
</feature>
<feature type="binding site" evidence="1">
    <location>
        <begin position="62"/>
        <end position="63"/>
    </location>
    <ligand>
        <name>NADP(+)</name>
        <dbReference type="ChEBI" id="CHEBI:58349"/>
    </ligand>
</feature>
<feature type="binding site" evidence="1">
    <location>
        <position position="89"/>
    </location>
    <ligand>
        <name>NADP(+)</name>
        <dbReference type="ChEBI" id="CHEBI:58349"/>
    </ligand>
</feature>
<feature type="binding site" evidence="1">
    <location>
        <position position="141"/>
    </location>
    <ligand>
        <name>substrate</name>
    </ligand>
</feature>
<feature type="binding site" evidence="1">
    <location>
        <begin position="154"/>
        <end position="158"/>
    </location>
    <ligand>
        <name>NADP(+)</name>
        <dbReference type="ChEBI" id="CHEBI:58349"/>
    </ligand>
</feature>
<feature type="binding site" evidence="1">
    <location>
        <position position="187"/>
    </location>
    <ligand>
        <name>NADP(+)</name>
        <dbReference type="ChEBI" id="CHEBI:58349"/>
    </ligand>
</feature>
<feature type="sequence conflict" description="In Ref. 1; AAC44307." evidence="2" ref="1">
    <original>D</original>
    <variation>A</variation>
    <location>
        <position position="23"/>
    </location>
</feature>